<keyword id="KW-0209">Deafness</keyword>
<keyword id="KW-0472">Membrane</keyword>
<keyword id="KW-1185">Reference proteome</keyword>
<keyword id="KW-0732">Signal</keyword>
<keyword id="KW-0812">Transmembrane</keyword>
<keyword id="KW-1133">Transmembrane helix</keyword>
<evidence type="ECO:0000255" key="1"/>
<evidence type="ECO:0000269" key="2">
    <source>
    </source>
</evidence>
<evidence type="ECO:0000269" key="3">
    <source>
    </source>
</evidence>
<evidence type="ECO:0000269" key="4">
    <source>
    </source>
</evidence>
<evidence type="ECO:0000305" key="5"/>
<feature type="signal peptide" evidence="1">
    <location>
        <begin position="1"/>
        <end position="28"/>
    </location>
</feature>
<feature type="chain" id="PRO_0000022556" description="Transmembrane inner ear expressed protein">
    <location>
        <begin position="29"/>
        <end position="153"/>
    </location>
</feature>
<feature type="topological domain" description="Extracellular" evidence="1">
    <location>
        <begin position="29"/>
        <end position="58"/>
    </location>
</feature>
<feature type="transmembrane region" description="Helical" evidence="1">
    <location>
        <begin position="59"/>
        <end position="79"/>
    </location>
</feature>
<feature type="topological domain" description="Cytoplasmic" evidence="1">
    <location>
        <begin position="80"/>
        <end position="153"/>
    </location>
</feature>
<reference key="1">
    <citation type="journal article" date="2002" name="Hum. Mol. Genet.">
        <title>Mutation of the novel gene Tmie results in sensory cell defects in the inner ear of spinner, a mouse model of human hearing loss DFNB6.</title>
        <authorList>
            <person name="Mitchem K.L."/>
            <person name="Hibbard E."/>
            <person name="Beyer L.A."/>
            <person name="Bosom K."/>
            <person name="Dootz G.A."/>
            <person name="Dolan D.F."/>
            <person name="Johnson K.R."/>
            <person name="Raphael Y."/>
            <person name="Kohrman D.C."/>
        </authorList>
    </citation>
    <scope>NUCLEOTIDE SEQUENCE [MRNA]</scope>
    <scope>TISSUE SPECIFICITY</scope>
    <scope>INVOLVEMENT IN SPINNER MUTANT STRAIN PHENOTYPE</scope>
    <source>
        <strain>C57BL/6J</strain>
    </source>
</reference>
<reference key="2">
    <citation type="journal article" date="2017" name="Elife">
        <title>The murine catecholamine methyltransferase mTOMT is essential for mechanotransduction by cochlear hair cells.</title>
        <authorList>
            <person name="Cunningham C.L."/>
            <person name="Wu Z."/>
            <person name="Jafari A."/>
            <person name="Zhao B."/>
            <person name="Schrode K."/>
            <person name="Harkins-Perry S."/>
            <person name="Lauer A."/>
            <person name="Mueller U."/>
        </authorList>
    </citation>
    <scope>INTERACTION WITH TOMT</scope>
</reference>
<reference key="3">
    <citation type="journal article" date="2022" name="Proc. Natl. Acad. Sci. U.S.A.">
        <title>The conductance and organization of the TMC1-containing mechanotransducer channel complex in auditory hair cells.</title>
        <authorList>
            <person name="Fettiplace R."/>
            <person name="Furness D.N."/>
            <person name="Beurg M."/>
        </authorList>
    </citation>
    <scope>FUNCTION</scope>
    <scope>MUTAGENESIS OF MET-412; THR-416; GLU-520; ASP-528; TRP-554 AND ASP-569</scope>
</reference>
<dbReference type="EMBL" id="AF481143">
    <property type="protein sequence ID" value="AAM89222.1"/>
    <property type="molecule type" value="mRNA"/>
</dbReference>
<dbReference type="CCDS" id="CCDS23578.1"/>
<dbReference type="RefSeq" id="NP_666372.1">
    <property type="nucleotide sequence ID" value="NM_146260.3"/>
</dbReference>
<dbReference type="RefSeq" id="XP_006512070.1">
    <property type="nucleotide sequence ID" value="XM_006512007.5"/>
</dbReference>
<dbReference type="RefSeq" id="XP_006512071.1">
    <property type="nucleotide sequence ID" value="XM_006512008.4"/>
</dbReference>
<dbReference type="RefSeq" id="XP_006512072.1">
    <property type="nucleotide sequence ID" value="XM_006512009.3"/>
</dbReference>
<dbReference type="RefSeq" id="XP_006512073.1">
    <property type="nucleotide sequence ID" value="XM_006512010.3"/>
</dbReference>
<dbReference type="RefSeq" id="XP_006512076.1">
    <property type="nucleotide sequence ID" value="XM_006512013.3"/>
</dbReference>
<dbReference type="RefSeq" id="XP_011241246.1">
    <property type="nucleotide sequence ID" value="XM_011242944.2"/>
</dbReference>
<dbReference type="RefSeq" id="XP_011241247.1">
    <property type="nucleotide sequence ID" value="XM_011242945.2"/>
</dbReference>
<dbReference type="RefSeq" id="XP_030100023.1">
    <property type="nucleotide sequence ID" value="XM_030244163.1"/>
</dbReference>
<dbReference type="RefSeq" id="XP_036010654.1">
    <property type="nucleotide sequence ID" value="XM_036154761.1"/>
</dbReference>
<dbReference type="SMR" id="Q8K467"/>
<dbReference type="CORUM" id="Q8K467"/>
<dbReference type="FunCoup" id="Q8K467">
    <property type="interactions" value="773"/>
</dbReference>
<dbReference type="STRING" id="10090.ENSMUSP00000060148"/>
<dbReference type="TCDB" id="8.A.116.1.1">
    <property type="family name" value="the transmembrane inner ear (tmie) family"/>
</dbReference>
<dbReference type="iPTMnet" id="Q8K467"/>
<dbReference type="PhosphoSitePlus" id="Q8K467"/>
<dbReference type="PaxDb" id="10090-ENSMUSP00000060148"/>
<dbReference type="ProteomicsDB" id="259254"/>
<dbReference type="Antibodypedia" id="29762">
    <property type="antibodies" value="72 antibodies from 18 providers"/>
</dbReference>
<dbReference type="DNASU" id="20776"/>
<dbReference type="Ensembl" id="ENSMUST00000050958.9">
    <property type="protein sequence ID" value="ENSMUSP00000060148.5"/>
    <property type="gene ID" value="ENSMUSG00000049555.11"/>
</dbReference>
<dbReference type="GeneID" id="20776"/>
<dbReference type="KEGG" id="mmu:20776"/>
<dbReference type="UCSC" id="uc009rvb.1">
    <property type="organism name" value="mouse"/>
</dbReference>
<dbReference type="AGR" id="MGI:2159400"/>
<dbReference type="CTD" id="259236"/>
<dbReference type="MGI" id="MGI:2159400">
    <property type="gene designation" value="Tmie"/>
</dbReference>
<dbReference type="VEuPathDB" id="HostDB:ENSMUSG00000049555"/>
<dbReference type="eggNOG" id="ENOG502RY3K">
    <property type="taxonomic scope" value="Eukaryota"/>
</dbReference>
<dbReference type="GeneTree" id="ENSGT00390000005082"/>
<dbReference type="HOGENOM" id="CLU_106776_1_0_1"/>
<dbReference type="InParanoid" id="Q8K467"/>
<dbReference type="OMA" id="CCIFNCR"/>
<dbReference type="OrthoDB" id="6154284at2759"/>
<dbReference type="PhylomeDB" id="Q8K467"/>
<dbReference type="TreeFam" id="TF332314"/>
<dbReference type="BioGRID-ORCS" id="20776">
    <property type="hits" value="2 hits in 76 CRISPR screens"/>
</dbReference>
<dbReference type="PRO" id="PR:Q8K467"/>
<dbReference type="Proteomes" id="UP000000589">
    <property type="component" value="Chromosome 9"/>
</dbReference>
<dbReference type="RNAct" id="Q8K467">
    <property type="molecule type" value="protein"/>
</dbReference>
<dbReference type="Bgee" id="ENSMUSG00000049555">
    <property type="expression patterns" value="Expressed in otolith organ and 122 other cell types or tissues"/>
</dbReference>
<dbReference type="ExpressionAtlas" id="Q8K467">
    <property type="expression patterns" value="baseline and differential"/>
</dbReference>
<dbReference type="GO" id="GO:0005886">
    <property type="term" value="C:plasma membrane"/>
    <property type="evidence" value="ECO:0000304"/>
    <property type="project" value="Reactome"/>
</dbReference>
<dbReference type="GO" id="GO:0042472">
    <property type="term" value="P:inner ear morphogenesis"/>
    <property type="evidence" value="ECO:0000315"/>
    <property type="project" value="MGI"/>
</dbReference>
<dbReference type="GO" id="GO:0007605">
    <property type="term" value="P:sensory perception of sound"/>
    <property type="evidence" value="ECO:0000315"/>
    <property type="project" value="MGI"/>
</dbReference>
<dbReference type="InterPro" id="IPR032006">
    <property type="entry name" value="TMIE"/>
</dbReference>
<dbReference type="PANTHER" id="PTHR28635">
    <property type="entry name" value="TRANSMEMBRANE INNER EAR EXPRESSED PROTEIN"/>
    <property type="match status" value="1"/>
</dbReference>
<dbReference type="PANTHER" id="PTHR28635:SF1">
    <property type="entry name" value="TRANSMEMBRANE INNER EAR EXPRESSED PROTEIN"/>
    <property type="match status" value="1"/>
</dbReference>
<dbReference type="Pfam" id="PF16038">
    <property type="entry name" value="TMIE"/>
    <property type="match status" value="1"/>
</dbReference>
<gene>
    <name type="primary">Tmie</name>
</gene>
<comment type="function">
    <text evidence="4">Auxiliary subunit of the mechanotransducer (MET) non-specific cation channel complex located at the tips of stereocilia of cochlear hair cells and that mediates sensory transduction in the auditory system (PubMed:36191207). The MET complex is composed of two dimeric pore-forming ion-conducting transmembrane TMC (TMC1 or TMC2) subunits, and aided by several auxiliary proteins including LHFPL5, TMIE, CIB2/3 and TOMT, and the tip-link PCDH15 (PubMed:36191207). May contribute to the formation of the pore (PubMed:36191207).</text>
</comment>
<comment type="subunit">
    <text evidence="3">Forms the MET channel composed of TMC (TMC1 or TMC2), TMIE, TOMT, CIB (CIB2 or CIB3), LHPL5 and PCDH15.</text>
</comment>
<comment type="subcellular location">
    <subcellularLocation>
        <location evidence="5">Membrane</location>
        <topology evidence="5">Single-pass type I membrane protein</topology>
    </subcellularLocation>
</comment>
<comment type="tissue specificity">
    <text evidence="2">Expressed in brain, kidney, liver, lung and cochlea.</text>
</comment>
<comment type="developmental stage">
    <text>Required for normal postnatal maturation of sensory hair cells in the cochlea, including correct development of stereocilia bundles.</text>
</comment>
<comment type="disease">
    <text evidence="2">Defects in Tmie are the cause of the spinner mutant strain phenotype (sr). This disorder results in hearing loss and vestibular dysfunction due to neuroepithelial defects in the inner ear. It is recognized by behavioral dysfunction, including bidirectional circling and head shaking. Auditory function in spinner mice is found to be reduced, based upon the lack of a startle reflex to sound at any age. Breeding experiments indicated that these defects are inherited in an autosomal recessive fashion. The postnatal defects present in the cochleae of sr/sr mice suggest a requirement for Tmie during maturation of sensory cells, including the normal development or maintenance of stereocilia bundles.</text>
</comment>
<proteinExistence type="evidence at protein level"/>
<name>TMIE_MOUSE</name>
<accession>Q8K467</accession>
<organism>
    <name type="scientific">Mus musculus</name>
    <name type="common">Mouse</name>
    <dbReference type="NCBI Taxonomy" id="10090"/>
    <lineage>
        <taxon>Eukaryota</taxon>
        <taxon>Metazoa</taxon>
        <taxon>Chordata</taxon>
        <taxon>Craniata</taxon>
        <taxon>Vertebrata</taxon>
        <taxon>Euteleostomi</taxon>
        <taxon>Mammalia</taxon>
        <taxon>Eutheria</taxon>
        <taxon>Euarchontoglires</taxon>
        <taxon>Glires</taxon>
        <taxon>Rodentia</taxon>
        <taxon>Myomorpha</taxon>
        <taxon>Muroidea</taxon>
        <taxon>Muridae</taxon>
        <taxon>Murinae</taxon>
        <taxon>Mus</taxon>
        <taxon>Mus</taxon>
    </lineage>
</organism>
<sequence length="153" mass="17027">MAGRQHGSGRLWALGGAALGACLAGVATQLVEPSTAPPKPKPPPLTKETVVFWDMRLWHVVGIFSLFVLSIIITLCCVFNCRVPRTRKEIEARYLQRKAAKMYTDKLETVPPLNELTEIPGEDKKKKKKDSVDTVAIKVEEDEKNEAKKKGEK</sequence>
<protein>
    <recommendedName>
        <fullName>Transmembrane inner ear expressed protein</fullName>
    </recommendedName>
</protein>